<protein>
    <recommendedName>
        <fullName>Phospholipase A2 phaiodactylipin</fullName>
        <shortName>PLA2</shortName>
    </recommendedName>
    <component>
        <recommendedName>
            <fullName>Phaiodactylipin large subunit</fullName>
            <ecNumber>3.1.1.4</ecNumber>
        </recommendedName>
    </component>
    <component>
        <recommendedName>
            <fullName>Phaiodactylipin small subunit</fullName>
        </recommendedName>
    </component>
</protein>
<dbReference type="EC" id="3.1.1.4"/>
<dbReference type="EMBL" id="AY571967">
    <property type="protein sequence ID" value="AAS98377.1"/>
    <property type="molecule type" value="mRNA"/>
</dbReference>
<dbReference type="SMR" id="Q6PXP0"/>
<dbReference type="iPTMnet" id="Q6PXP0"/>
<dbReference type="GO" id="GO:0005576">
    <property type="term" value="C:extracellular region"/>
    <property type="evidence" value="ECO:0000314"/>
    <property type="project" value="UniProtKB"/>
</dbReference>
<dbReference type="GO" id="GO:0005509">
    <property type="term" value="F:calcium ion binding"/>
    <property type="evidence" value="ECO:0000250"/>
    <property type="project" value="UniProtKB"/>
</dbReference>
<dbReference type="GO" id="GO:0047498">
    <property type="term" value="F:calcium-dependent phospholipase A2 activity"/>
    <property type="evidence" value="ECO:0000314"/>
    <property type="project" value="UniProtKB"/>
</dbReference>
<dbReference type="GO" id="GO:0090729">
    <property type="term" value="F:toxin activity"/>
    <property type="evidence" value="ECO:0000314"/>
    <property type="project" value="UniProtKB"/>
</dbReference>
<dbReference type="GO" id="GO:0050482">
    <property type="term" value="P:arachidonate secretion"/>
    <property type="evidence" value="ECO:0007669"/>
    <property type="project" value="InterPro"/>
</dbReference>
<dbReference type="GO" id="GO:0044179">
    <property type="term" value="P:hemolysis in another organism"/>
    <property type="evidence" value="ECO:0000314"/>
    <property type="project" value="UniProtKB"/>
</dbReference>
<dbReference type="GO" id="GO:0016042">
    <property type="term" value="P:lipid catabolic process"/>
    <property type="evidence" value="ECO:0007669"/>
    <property type="project" value="UniProtKB-KW"/>
</dbReference>
<dbReference type="GO" id="GO:0006644">
    <property type="term" value="P:phospholipid metabolic process"/>
    <property type="evidence" value="ECO:0000314"/>
    <property type="project" value="UniProtKB"/>
</dbReference>
<dbReference type="CDD" id="cd04704">
    <property type="entry name" value="PLA2_bee_venom_like"/>
    <property type="match status" value="1"/>
</dbReference>
<dbReference type="Gene3D" id="1.20.90.10">
    <property type="entry name" value="Phospholipase A2 domain"/>
    <property type="match status" value="1"/>
</dbReference>
<dbReference type="InterPro" id="IPR016090">
    <property type="entry name" value="PLipase_A2_dom"/>
</dbReference>
<dbReference type="InterPro" id="IPR036444">
    <property type="entry name" value="PLipase_A2_dom_sf"/>
</dbReference>
<dbReference type="InterPro" id="IPR033113">
    <property type="entry name" value="PLipase_A2_His_AS"/>
</dbReference>
<dbReference type="PANTHER" id="PTHR12253">
    <property type="entry name" value="RH14732P"/>
    <property type="match status" value="1"/>
</dbReference>
<dbReference type="Pfam" id="PF05826">
    <property type="entry name" value="Phospholip_A2_2"/>
    <property type="match status" value="1"/>
</dbReference>
<dbReference type="SUPFAM" id="SSF48619">
    <property type="entry name" value="Phospholipase A2, PLA2"/>
    <property type="match status" value="1"/>
</dbReference>
<dbReference type="PROSITE" id="PS00118">
    <property type="entry name" value="PA2_HIS"/>
    <property type="match status" value="1"/>
</dbReference>
<sequence>MVKRVSKEEMDALERSCSQPFEEERFLIVSGTKWCGNNNIAANYSDLGFLEADKCCRDHDHCDHIASGETKYGLENKGLFTILNCDCDEAFDHCLKEISNNVTTDIRQKGGAENVWRFYFQWYNANCYRLYCKDEKSARDEACTNQYAVVKKNFTVQ</sequence>
<comment type="function">
    <text evidence="4">Scorpion venom phospholipase A2 (PLA2) that is lethal to crickets and crustaceae. Causes inflammation in mice and lysis of human erythrocytes. Has a mild anticoagulant effect on human platelets. PLA2 catalyzes the calcium-dependent hydrolysis of the 2-acyl groups in 3-sn-phosphoglycerides.</text>
</comment>
<comment type="catalytic activity">
    <reaction evidence="3 4">
        <text>a 1,2-diacyl-sn-glycero-3-phosphocholine + H2O = a 1-acyl-sn-glycero-3-phosphocholine + a fatty acid + H(+)</text>
        <dbReference type="Rhea" id="RHEA:15801"/>
        <dbReference type="ChEBI" id="CHEBI:15377"/>
        <dbReference type="ChEBI" id="CHEBI:15378"/>
        <dbReference type="ChEBI" id="CHEBI:28868"/>
        <dbReference type="ChEBI" id="CHEBI:57643"/>
        <dbReference type="ChEBI" id="CHEBI:58168"/>
        <dbReference type="EC" id="3.1.1.4"/>
    </reaction>
</comment>
<comment type="cofactor">
    <cofactor evidence="4">
        <name>Ca(2+)</name>
        <dbReference type="ChEBI" id="CHEBI:29108"/>
    </cofactor>
    <text evidence="4">Binds 1 Ca(2+) ion.</text>
</comment>
<comment type="biophysicochemical properties">
    <kinetics>
        <Vmax evidence="4">211.0 umol/min/mg enzyme with SAPE as substrate</Vmax>
        <Vmax evidence="4">142.0 umol/min/mg enzyme with SAPC as substrate</Vmax>
        <Vmax evidence="4">84.0 umol/min/mg enzyme with SAPS as substrate</Vmax>
        <Vmax evidence="4">51.0 umol/min/mg enzyme with DSPE as substrate</Vmax>
        <Vmax evidence="4">149.0 umol/min/mg enzyme with DSPC as substrate</Vmax>
        <Vmax evidence="4">63.0 umol/min/mg enzyme with DSPS as substrate</Vmax>
        <Vmax evidence="4">48.0 umol/min/mg enzyme with DPPE as substrate</Vmax>
        <Vmax evidence="4">67.0 umol/min/mg enzyme with DPPC as substrate</Vmax>
        <Vmax evidence="4">32.0 umol/min/mg enzyme with DPPS as substrate</Vmax>
    </kinetics>
    <phDependence>
        <text evidence="4">Optimum pH is 8.0. Less active at pH 5.0 and pH 10.0.</text>
    </phDependence>
    <temperatureDependence>
        <text evidence="4">Optimum temperature is 37 degrees Celsius. Less active at 25 degrees Celsius.</text>
    </temperatureDependence>
</comment>
<comment type="subunit">
    <text>Heterodimer composed of a small subunit and a large subunit; disulfide-linked.</text>
</comment>
<comment type="subcellular location">
    <subcellularLocation>
        <location evidence="4">Secreted</location>
    </subcellularLocation>
</comment>
<comment type="tissue specificity">
    <text evidence="4">Expressed by the venom gland.</text>
</comment>
<comment type="mass spectrometry">
    <molecule>Phaiodactylipin small subunit</molecule>
</comment>
<comment type="similarity">
    <text evidence="6">Belongs to the phospholipase A2 family. Group III subfamily.</text>
</comment>
<comment type="caution">
    <text evidence="6">Lacks one of the four calcium-binding sites found in other family members.</text>
</comment>
<comment type="caution">
    <text evidence="6">It is uncertain whether Met-1 or Met-10 is the initiator.</text>
</comment>
<accession>Q6PXP0</accession>
<keyword id="KW-0106">Calcium</keyword>
<keyword id="KW-0204">Cytolysis</keyword>
<keyword id="KW-0903">Direct protein sequencing</keyword>
<keyword id="KW-1015">Disulfide bond</keyword>
<keyword id="KW-0325">Glycoprotein</keyword>
<keyword id="KW-0354">Hemolysis</keyword>
<keyword id="KW-1199">Hemostasis impairing toxin</keyword>
<keyword id="KW-0378">Hydrolase</keyword>
<keyword id="KW-0442">Lipid degradation</keyword>
<keyword id="KW-0443">Lipid metabolism</keyword>
<keyword id="KW-0479">Metal-binding</keyword>
<keyword id="KW-1201">Platelet aggregation inhibiting toxin</keyword>
<keyword id="KW-0964">Secreted</keyword>
<keyword id="KW-0732">Signal</keyword>
<keyword id="KW-0800">Toxin</keyword>
<keyword id="KW-0865">Zymogen</keyword>
<name>PA2_ANUPH</name>
<proteinExistence type="evidence at protein level"/>
<evidence type="ECO:0000250" key="1">
    <source>
        <dbReference type="UniProtKB" id="P00630"/>
    </source>
</evidence>
<evidence type="ECO:0000250" key="2">
    <source>
        <dbReference type="UniProtKB" id="Q6T178"/>
    </source>
</evidence>
<evidence type="ECO:0000255" key="3">
    <source>
        <dbReference type="PROSITE-ProRule" id="PRU10035"/>
    </source>
</evidence>
<evidence type="ECO:0000269" key="4">
    <source>
    </source>
</evidence>
<evidence type="ECO:0000303" key="5">
    <source>
    </source>
</evidence>
<evidence type="ECO:0000305" key="6"/>
<evidence type="ECO:0000312" key="7">
    <source>
        <dbReference type="EMBL" id="AAS98377.1"/>
    </source>
</evidence>
<organism>
    <name type="scientific">Anuroctonus phaiodactylus</name>
    <name type="common">Mafia scorpion</name>
    <dbReference type="NCBI Taxonomy" id="246982"/>
    <lineage>
        <taxon>Eukaryota</taxon>
        <taxon>Metazoa</taxon>
        <taxon>Ecdysozoa</taxon>
        <taxon>Arthropoda</taxon>
        <taxon>Chelicerata</taxon>
        <taxon>Arachnida</taxon>
        <taxon>Scorpiones</taxon>
        <taxon>Iurida</taxon>
        <taxon>Chactoidea</taxon>
        <taxon>Chactidae</taxon>
        <taxon>Uroctoninae</taxon>
        <taxon>Anuroctonus</taxon>
    </lineage>
</organism>
<feature type="signal peptide" evidence="6">
    <location>
        <begin position="1"/>
        <end status="unknown"/>
    </location>
</feature>
<feature type="propeptide" id="PRO_0000022984" description="Removed in mature form" evidence="4">
    <location>
        <begin status="unknown"/>
        <end position="25"/>
    </location>
</feature>
<feature type="chain" id="PRO_0000022985" description="Phaiodactylipin large subunit" evidence="4">
    <location>
        <begin position="26"/>
        <end position="133"/>
    </location>
</feature>
<feature type="propeptide" id="PRO_0000022986" description="Removed in mature form" evidence="4">
    <location>
        <begin position="134"/>
        <end position="139"/>
    </location>
</feature>
<feature type="chain" id="PRO_0000022987" description="Phaiodactylipin small subunit" evidence="4">
    <location>
        <begin position="140"/>
        <end position="157"/>
    </location>
</feature>
<feature type="active site" evidence="1 3">
    <location>
        <position position="59"/>
    </location>
</feature>
<feature type="active site" evidence="1 3">
    <location>
        <position position="88"/>
    </location>
</feature>
<feature type="binding site" evidence="1">
    <location>
        <position position="34"/>
    </location>
    <ligand>
        <name>Ca(2+)</name>
        <dbReference type="ChEBI" id="CHEBI:29108"/>
    </ligand>
</feature>
<feature type="binding site" evidence="1">
    <location>
        <position position="36"/>
    </location>
    <ligand>
        <name>Ca(2+)</name>
        <dbReference type="ChEBI" id="CHEBI:29108"/>
    </ligand>
</feature>
<feature type="binding site" evidence="1">
    <location>
        <position position="60"/>
    </location>
    <ligand>
        <name>Ca(2+)</name>
        <dbReference type="ChEBI" id="CHEBI:29108"/>
    </ligand>
</feature>
<feature type="glycosylation site" description="N-linked (GlcNAc...) asparagine" evidence="5">
    <location>
        <position position="43"/>
    </location>
</feature>
<feature type="glycosylation site" description="N-linked (GlcNAc...) asparagine" evidence="5">
    <location>
        <position position="101"/>
    </location>
</feature>
<feature type="glycosylation site" description="N-linked (GlcNAc...) asparagine" evidence="4">
    <location>
        <position position="153"/>
    </location>
</feature>
<feature type="disulfide bond" evidence="2">
    <location>
        <begin position="35"/>
        <end position="56"/>
    </location>
</feature>
<feature type="disulfide bond" evidence="2">
    <location>
        <begin position="55"/>
        <end position="94"/>
    </location>
</feature>
<feature type="disulfide bond" evidence="2">
    <location>
        <begin position="62"/>
        <end position="87"/>
    </location>
</feature>
<feature type="disulfide bond" evidence="2">
    <location>
        <begin position="85"/>
        <end position="127"/>
    </location>
</feature>
<feature type="disulfide bond" description="Interchain (between large and small subunits)" evidence="2">
    <location>
        <begin position="132"/>
        <end position="143"/>
    </location>
</feature>
<reference evidence="6 7" key="1">
    <citation type="journal article" date="2004" name="Eur. J. Biochem.">
        <title>Phaiodactylipin, a glycosylated heterodimeric phospholipase A from the venom of the scorpion Anuroctonus phaiodactylus.</title>
        <authorList>
            <person name="Valdez-Cruz N.A."/>
            <person name="Batista C.V.F."/>
            <person name="Possani L.D."/>
        </authorList>
    </citation>
    <scope>NUCLEOTIDE SEQUENCE [MRNA]</scope>
    <scope>PROTEIN SEQUENCE OF 26-133 AND 140-157</scope>
    <scope>FUNCTION</scope>
    <scope>CATALYTIC ACTIVITY</scope>
    <scope>COFACTOR</scope>
    <scope>BIOPHYSICOCHEMICAL PROPERTIES</scope>
    <scope>TISSUE SPECIFICITY</scope>
    <scope>GLYCOSYLATION</scope>
    <scope>MASS SPECTROMETRY</scope>
    <source>
        <tissue>Venom</tissue>
        <tissue evidence="4">Venom gland</tissue>
    </source>
</reference>